<feature type="chain" id="PRO_0000221212" description="Protein unc-119 homolog A">
    <location>
        <begin position="1"/>
        <end position="240"/>
    </location>
</feature>
<feature type="region of interest" description="Disordered" evidence="2">
    <location>
        <begin position="1"/>
        <end position="61"/>
    </location>
</feature>
<feature type="region of interest" description="Required for midbody localization">
    <location>
        <begin position="1"/>
        <end position="59"/>
    </location>
</feature>
<feature type="region of interest" description="Required for centrosome localization">
    <location>
        <begin position="121"/>
        <end position="240"/>
    </location>
</feature>
<feature type="compositionally biased region" description="Gly residues" evidence="2">
    <location>
        <begin position="1"/>
        <end position="11"/>
    </location>
</feature>
<feature type="binding site">
    <location>
        <position position="131"/>
    </location>
    <ligand>
        <name>tetradecanoate</name>
        <dbReference type="ChEBI" id="CHEBI:30807"/>
    </ligand>
</feature>
<feature type="modified residue" description="Phosphoserine; by CK2" evidence="15">
    <location>
        <position position="37"/>
    </location>
</feature>
<feature type="modified residue" description="Phosphoserine; by CK2" evidence="15">
    <location>
        <position position="39"/>
    </location>
</feature>
<feature type="modified residue" description="Phosphoserine; by CK2" evidence="15">
    <location>
        <position position="41"/>
    </location>
</feature>
<feature type="splice variant" id="VSP_004545" description="In isoform B." evidence="19 20 21">
    <original>ISEMIRHPYETQSDSFYFVDDRLVMHNKADYSYSGTP</original>
    <variation>SARAGSSGSGEVGASRD</variation>
    <location>
        <begin position="204"/>
        <end position="240"/>
    </location>
</feature>
<feature type="sequence variant" id="VAR_071184" description="In IMD13; uncertain significance; impairs interaction with LCK; impairs LCK activation; induces LCK mislocalization; dbSNP:rs199714731." evidence="11">
    <original>G</original>
    <variation>V</variation>
    <location>
        <position position="22"/>
    </location>
</feature>
<feature type="sequence variant" id="VAR_088461" description="In CORD24; when expressed in transgenic mice, it results in age-dependent fundus lesions, defects in photoreceptor synaptic transmission and retinal degeneration." evidence="3">
    <location>
        <begin position="57"/>
        <end position="240"/>
    </location>
</feature>
<feature type="sequence variant" id="VAR_088462" description="In CORD24; uncertain significance." evidence="16">
    <location>
        <begin position="201"/>
        <end position="240"/>
    </location>
</feature>
<feature type="mutagenesis site" description="Impairs interaction with LCK." evidence="6">
    <original>PQPP</original>
    <variation>AQPA</variation>
    <location>
        <begin position="29"/>
        <end position="32"/>
    </location>
</feature>
<feature type="mutagenesis site" description="Loss of phosphorylation; when associated with A-39 and A-41." evidence="15">
    <original>S</original>
    <variation>A</variation>
    <location>
        <position position="37"/>
    </location>
</feature>
<feature type="mutagenesis site" description="Loss of phosphorylation; when associated with A-37 and A-41." evidence="15">
    <original>S</original>
    <variation>A</variation>
    <location>
        <position position="39"/>
    </location>
</feature>
<feature type="mutagenesis site" description="Loss of phosphorylation; when associated with A-37 and A-39." evidence="15">
    <original>S</original>
    <variation>A</variation>
    <location>
        <position position="41"/>
    </location>
</feature>
<feature type="helix" evidence="26">
    <location>
        <begin position="62"/>
        <end position="64"/>
    </location>
</feature>
<feature type="turn" evidence="26">
    <location>
        <begin position="65"/>
        <end position="67"/>
    </location>
</feature>
<feature type="helix" evidence="26">
    <location>
        <begin position="79"/>
        <end position="81"/>
    </location>
</feature>
<feature type="strand" evidence="26">
    <location>
        <begin position="87"/>
        <end position="95"/>
    </location>
</feature>
<feature type="turn" evidence="26">
    <location>
        <begin position="96"/>
        <end position="98"/>
    </location>
</feature>
<feature type="strand" evidence="26">
    <location>
        <begin position="101"/>
        <end position="106"/>
    </location>
</feature>
<feature type="turn" evidence="27">
    <location>
        <begin position="123"/>
        <end position="127"/>
    </location>
</feature>
<feature type="strand" evidence="26">
    <location>
        <begin position="128"/>
        <end position="132"/>
    </location>
</feature>
<feature type="helix" evidence="26">
    <location>
        <begin position="135"/>
        <end position="139"/>
    </location>
</feature>
<feature type="strand" evidence="26">
    <location>
        <begin position="141"/>
        <end position="150"/>
    </location>
</feature>
<feature type="strand" evidence="26">
    <location>
        <begin position="158"/>
        <end position="167"/>
    </location>
</feature>
<feature type="strand" evidence="26">
    <location>
        <begin position="170"/>
        <end position="178"/>
    </location>
</feature>
<feature type="strand" evidence="26">
    <location>
        <begin position="186"/>
        <end position="195"/>
    </location>
</feature>
<feature type="helix" evidence="26">
    <location>
        <begin position="201"/>
        <end position="209"/>
    </location>
</feature>
<feature type="strand" evidence="26">
    <location>
        <begin position="214"/>
        <end position="222"/>
    </location>
</feature>
<feature type="strand" evidence="26">
    <location>
        <begin position="225"/>
        <end position="235"/>
    </location>
</feature>
<evidence type="ECO:0000250" key="1">
    <source>
        <dbReference type="UniProtKB" id="Q9Z2R6"/>
    </source>
</evidence>
<evidence type="ECO:0000256" key="2">
    <source>
        <dbReference type="SAM" id="MobiDB-lite"/>
    </source>
</evidence>
<evidence type="ECO:0000269" key="3">
    <source>
    </source>
</evidence>
<evidence type="ECO:0000269" key="4">
    <source>
    </source>
</evidence>
<evidence type="ECO:0000269" key="5">
    <source>
    </source>
</evidence>
<evidence type="ECO:0000269" key="6">
    <source>
    </source>
</evidence>
<evidence type="ECO:0000269" key="7">
    <source>
    </source>
</evidence>
<evidence type="ECO:0000269" key="8">
    <source>
    </source>
</evidence>
<evidence type="ECO:0000269" key="9">
    <source>
    </source>
</evidence>
<evidence type="ECO:0000269" key="10">
    <source>
    </source>
</evidence>
<evidence type="ECO:0000269" key="11">
    <source>
    </source>
</evidence>
<evidence type="ECO:0000269" key="12">
    <source>
    </source>
</evidence>
<evidence type="ECO:0000269" key="13">
    <source>
    </source>
</evidence>
<evidence type="ECO:0000269" key="14">
    <source>
    </source>
</evidence>
<evidence type="ECO:0000269" key="15">
    <source>
    </source>
</evidence>
<evidence type="ECO:0000269" key="16">
    <source>
    </source>
</evidence>
<evidence type="ECO:0000269" key="17">
    <source>
    </source>
</evidence>
<evidence type="ECO:0000269" key="18">
    <source>
    </source>
</evidence>
<evidence type="ECO:0000303" key="19">
    <source>
    </source>
</evidence>
<evidence type="ECO:0000303" key="20">
    <source>
    </source>
</evidence>
<evidence type="ECO:0000303" key="21">
    <source>
    </source>
</evidence>
<evidence type="ECO:0000305" key="22"/>
<evidence type="ECO:0000305" key="23">
    <source>
    </source>
</evidence>
<evidence type="ECO:0000305" key="24">
    <source>
    </source>
</evidence>
<evidence type="ECO:0000305" key="25">
    <source>
    </source>
</evidence>
<evidence type="ECO:0007829" key="26">
    <source>
        <dbReference type="PDB" id="3GQQ"/>
    </source>
</evidence>
<evidence type="ECO:0007829" key="27">
    <source>
        <dbReference type="PDB" id="6H6A"/>
    </source>
</evidence>
<name>U119A_HUMAN</name>
<accession>Q13432</accession>
<accession>A8K8G4</accession>
<accession>F1T095</accession>
<accession>O95126</accession>
<keyword id="KW-0002">3D-structure</keyword>
<keyword id="KW-0025">Alternative splicing</keyword>
<keyword id="KW-0182">Cone-rod dystrophy</keyword>
<keyword id="KW-0963">Cytoplasm</keyword>
<keyword id="KW-0206">Cytoskeleton</keyword>
<keyword id="KW-0225">Disease variant</keyword>
<keyword id="KW-0254">Endocytosis</keyword>
<keyword id="KW-0446">Lipid-binding</keyword>
<keyword id="KW-0597">Phosphoprotein</keyword>
<keyword id="KW-0653">Protein transport</keyword>
<keyword id="KW-1267">Proteomics identification</keyword>
<keyword id="KW-1185">Reference proteome</keyword>
<keyword id="KW-0716">Sensory transduction</keyword>
<keyword id="KW-0813">Transport</keyword>
<keyword id="KW-0844">Vision</keyword>
<sequence length="240" mass="26962">MKVKKGGGGAGTATESAPGPSGQSVAPIPQPPAESESGSESEPDAGPGPRPGPLQRKQPIGPEDVLGLQRITGDYLCSPEENIYKIDFVRFKIRDMDSGTVLFEIKKPPVSERLPINRRDLDPNAGRFVRYQFTPAFLRLRQVGATVEFTVGDKPVNNFRMIERHYFRNQLLKSFDFHFGFCIPSSKNTCEHIYDFPPLSEELISEMIRHPYETQSDSFYFVDDRLVMHNKADYSYSGTP</sequence>
<gene>
    <name type="primary">UNC119</name>
    <name type="synonym">RG4</name>
</gene>
<dbReference type="EMBL" id="U40998">
    <property type="protein sequence ID" value="AAC50360.1"/>
    <property type="molecule type" value="mRNA"/>
</dbReference>
<dbReference type="EMBL" id="AF028788">
    <property type="protein sequence ID" value="AAD01875.1"/>
    <property type="molecule type" value="mRNA"/>
</dbReference>
<dbReference type="EMBL" id="AF028789">
    <property type="protein sequence ID" value="AAD01876.1"/>
    <property type="molecule type" value="mRNA"/>
</dbReference>
<dbReference type="EMBL" id="AF125998">
    <property type="protein sequence ID" value="AAD31422.1"/>
    <property type="molecule type" value="Genomic_DNA"/>
</dbReference>
<dbReference type="EMBL" id="AF125997">
    <property type="protein sequence ID" value="AAD31422.1"/>
    <property type="status" value="JOINED"/>
    <property type="molecule type" value="Genomic_DNA"/>
</dbReference>
<dbReference type="EMBL" id="AK292329">
    <property type="protein sequence ID" value="BAF85018.1"/>
    <property type="molecule type" value="mRNA"/>
</dbReference>
<dbReference type="EMBL" id="AB593014">
    <property type="protein sequence ID" value="BAJ83969.1"/>
    <property type="molecule type" value="mRNA"/>
</dbReference>
<dbReference type="EMBL" id="AC005726">
    <property type="status" value="NOT_ANNOTATED_CDS"/>
    <property type="molecule type" value="Genomic_DNA"/>
</dbReference>
<dbReference type="EMBL" id="CH471159">
    <property type="protein sequence ID" value="EAW51095.1"/>
    <property type="molecule type" value="Genomic_DNA"/>
</dbReference>
<dbReference type="EMBL" id="BC027176">
    <property type="protein sequence ID" value="AAH27176.1"/>
    <property type="molecule type" value="mRNA"/>
</dbReference>
<dbReference type="CCDS" id="CCDS11233.1">
    <molecule id="Q13432-1"/>
</dbReference>
<dbReference type="CCDS" id="CCDS11234.1">
    <molecule id="Q13432-2"/>
</dbReference>
<dbReference type="RefSeq" id="NP_001317095.1">
    <property type="nucleotide sequence ID" value="NM_001330166.1"/>
</dbReference>
<dbReference type="RefSeq" id="NP_005139.1">
    <molecule id="Q13432-1"/>
    <property type="nucleotide sequence ID" value="NM_005148.4"/>
</dbReference>
<dbReference type="RefSeq" id="NP_473376.1">
    <molecule id="Q13432-2"/>
    <property type="nucleotide sequence ID" value="NM_054035.2"/>
</dbReference>
<dbReference type="PDB" id="3GQQ">
    <property type="method" value="X-ray"/>
    <property type="resolution" value="1.95 A"/>
    <property type="chains" value="A/B/C/D/E/F=56-240"/>
</dbReference>
<dbReference type="PDB" id="3RBQ">
    <property type="method" value="X-ray"/>
    <property type="resolution" value="2.00 A"/>
    <property type="chains" value="A/B/C/D/E/F=56-240"/>
</dbReference>
<dbReference type="PDB" id="4GOJ">
    <property type="method" value="X-ray"/>
    <property type="resolution" value="2.10 A"/>
    <property type="chains" value="C/D=1-240"/>
</dbReference>
<dbReference type="PDB" id="4GOK">
    <property type="method" value="X-ray"/>
    <property type="resolution" value="2.60 A"/>
    <property type="chains" value="C/G=1-240"/>
</dbReference>
<dbReference type="PDB" id="5L7K">
    <property type="method" value="X-ray"/>
    <property type="resolution" value="2.10 A"/>
    <property type="chains" value="A/G=58-237"/>
</dbReference>
<dbReference type="PDB" id="6H6A">
    <property type="method" value="X-ray"/>
    <property type="resolution" value="2.00 A"/>
    <property type="chains" value="D/G/J=59-240"/>
</dbReference>
<dbReference type="PDB" id="7UMO">
    <property type="method" value="X-ray"/>
    <property type="resolution" value="2.30 A"/>
    <property type="chains" value="A/B/C/D/E/F=57-240"/>
</dbReference>
<dbReference type="PDB" id="9GKG">
    <property type="method" value="X-ray"/>
    <property type="resolution" value="2.21 A"/>
    <property type="chains" value="A/B/C/D/E/K=59-240"/>
</dbReference>
<dbReference type="PDBsum" id="3GQQ"/>
<dbReference type="PDBsum" id="3RBQ"/>
<dbReference type="PDBsum" id="4GOJ"/>
<dbReference type="PDBsum" id="4GOK"/>
<dbReference type="PDBsum" id="5L7K"/>
<dbReference type="PDBsum" id="6H6A"/>
<dbReference type="PDBsum" id="7UMO"/>
<dbReference type="PDBsum" id="9GKG"/>
<dbReference type="SMR" id="Q13432"/>
<dbReference type="BioGRID" id="114548">
    <property type="interactions" value="156"/>
</dbReference>
<dbReference type="CORUM" id="Q13432"/>
<dbReference type="DIP" id="DIP-42697N"/>
<dbReference type="FunCoup" id="Q13432">
    <property type="interactions" value="347"/>
</dbReference>
<dbReference type="IntAct" id="Q13432">
    <property type="interactions" value="138"/>
</dbReference>
<dbReference type="MINT" id="Q13432"/>
<dbReference type="STRING" id="9606.ENSP00000337040"/>
<dbReference type="GuidetoPHARMACOLOGY" id="3011"/>
<dbReference type="iPTMnet" id="Q13432"/>
<dbReference type="MetOSite" id="Q13432"/>
<dbReference type="PhosphoSitePlus" id="Q13432"/>
<dbReference type="BioMuta" id="UNC119"/>
<dbReference type="DMDM" id="2498854"/>
<dbReference type="jPOST" id="Q13432"/>
<dbReference type="MassIVE" id="Q13432"/>
<dbReference type="PaxDb" id="9606-ENSP00000337040"/>
<dbReference type="PeptideAtlas" id="Q13432"/>
<dbReference type="ProteomicsDB" id="59426">
    <molecule id="Q13432-1"/>
</dbReference>
<dbReference type="ProteomicsDB" id="59427">
    <molecule id="Q13432-2"/>
</dbReference>
<dbReference type="Pumba" id="Q13432"/>
<dbReference type="Antibodypedia" id="26315">
    <property type="antibodies" value="61 antibodies from 22 providers"/>
</dbReference>
<dbReference type="DNASU" id="9094"/>
<dbReference type="Ensembl" id="ENST00000301032.8">
    <molecule id="Q13432-2"/>
    <property type="protein sequence ID" value="ENSP00000301032.4"/>
    <property type="gene ID" value="ENSG00000109103.12"/>
</dbReference>
<dbReference type="Ensembl" id="ENST00000335765.9">
    <molecule id="Q13432-1"/>
    <property type="protein sequence ID" value="ENSP00000337040.3"/>
    <property type="gene ID" value="ENSG00000109103.12"/>
</dbReference>
<dbReference type="GeneID" id="9094"/>
<dbReference type="KEGG" id="hsa:9094"/>
<dbReference type="MANE-Select" id="ENST00000335765.9">
    <property type="protein sequence ID" value="ENSP00000337040.3"/>
    <property type="RefSeq nucleotide sequence ID" value="NM_005148.4"/>
    <property type="RefSeq protein sequence ID" value="NP_005139.1"/>
</dbReference>
<dbReference type="UCSC" id="uc002hbk.3">
    <molecule id="Q13432-1"/>
    <property type="organism name" value="human"/>
</dbReference>
<dbReference type="AGR" id="HGNC:12565"/>
<dbReference type="CTD" id="9094"/>
<dbReference type="DisGeNET" id="9094"/>
<dbReference type="GeneCards" id="UNC119"/>
<dbReference type="HGNC" id="HGNC:12565">
    <property type="gene designation" value="UNC119"/>
</dbReference>
<dbReference type="HPA" id="ENSG00000109103">
    <property type="expression patterns" value="Tissue enriched (retina)"/>
</dbReference>
<dbReference type="MalaCards" id="UNC119"/>
<dbReference type="MIM" id="604011">
    <property type="type" value="gene"/>
</dbReference>
<dbReference type="MIM" id="615518">
    <property type="type" value="phenotype"/>
</dbReference>
<dbReference type="MIM" id="620342">
    <property type="type" value="phenotype"/>
</dbReference>
<dbReference type="neXtProt" id="NX_Q13432"/>
<dbReference type="OpenTargets" id="ENSG00000109103"/>
<dbReference type="Orphanet" id="1872">
    <property type="disease" value="Cone rod dystrophy"/>
</dbReference>
<dbReference type="Orphanet" id="228000">
    <property type="disease" value="Idiopathic CD4 lymphocytopenia"/>
</dbReference>
<dbReference type="PharmGKB" id="PA37202"/>
<dbReference type="VEuPathDB" id="HostDB:ENSG00000109103"/>
<dbReference type="eggNOG" id="KOG4037">
    <property type="taxonomic scope" value="Eukaryota"/>
</dbReference>
<dbReference type="GeneTree" id="ENSGT00390000014595"/>
<dbReference type="InParanoid" id="Q13432"/>
<dbReference type="OMA" id="CLVMHNK"/>
<dbReference type="OrthoDB" id="10248777at2759"/>
<dbReference type="PAN-GO" id="Q13432">
    <property type="GO annotations" value="12 GO annotations based on evolutionary models"/>
</dbReference>
<dbReference type="PhylomeDB" id="Q13432"/>
<dbReference type="TreeFam" id="TF314474"/>
<dbReference type="PathwayCommons" id="Q13432"/>
<dbReference type="SignaLink" id="Q13432"/>
<dbReference type="BioGRID-ORCS" id="9094">
    <property type="hits" value="57 hits in 1156 CRISPR screens"/>
</dbReference>
<dbReference type="ChiTaRS" id="UNC119">
    <property type="organism name" value="human"/>
</dbReference>
<dbReference type="EvolutionaryTrace" id="Q13432"/>
<dbReference type="GeneWiki" id="Protein_unc-119_homolog"/>
<dbReference type="GenomeRNAi" id="9094"/>
<dbReference type="Pharos" id="Q13432">
    <property type="development level" value="Tchem"/>
</dbReference>
<dbReference type="PRO" id="PR:Q13432"/>
<dbReference type="Proteomes" id="UP000005640">
    <property type="component" value="Chromosome 17"/>
</dbReference>
<dbReference type="RNAct" id="Q13432">
    <property type="molecule type" value="protein"/>
</dbReference>
<dbReference type="Bgee" id="ENSG00000109103">
    <property type="expression patterns" value="Expressed in granulocyte and 155 other cell types or tissues"/>
</dbReference>
<dbReference type="ExpressionAtlas" id="Q13432">
    <property type="expression patterns" value="baseline and differential"/>
</dbReference>
<dbReference type="GO" id="GO:0005813">
    <property type="term" value="C:centrosome"/>
    <property type="evidence" value="ECO:0000314"/>
    <property type="project" value="UniProtKB"/>
</dbReference>
<dbReference type="GO" id="GO:0005829">
    <property type="term" value="C:cytosol"/>
    <property type="evidence" value="ECO:0000304"/>
    <property type="project" value="ProtInc"/>
</dbReference>
<dbReference type="GO" id="GO:0045171">
    <property type="term" value="C:intercellular bridge"/>
    <property type="evidence" value="ECO:0000314"/>
    <property type="project" value="UniProtKB"/>
</dbReference>
<dbReference type="GO" id="GO:0051233">
    <property type="term" value="C:spindle midzone"/>
    <property type="evidence" value="ECO:0000314"/>
    <property type="project" value="UniProtKB"/>
</dbReference>
<dbReference type="GO" id="GO:0000922">
    <property type="term" value="C:spindle pole"/>
    <property type="evidence" value="ECO:0000314"/>
    <property type="project" value="UniProtKB"/>
</dbReference>
<dbReference type="GO" id="GO:0045202">
    <property type="term" value="C:synapse"/>
    <property type="evidence" value="ECO:0007669"/>
    <property type="project" value="GOC"/>
</dbReference>
<dbReference type="GO" id="GO:0008289">
    <property type="term" value="F:lipid binding"/>
    <property type="evidence" value="ECO:0000314"/>
    <property type="project" value="UniProtKB"/>
</dbReference>
<dbReference type="GO" id="GO:0007268">
    <property type="term" value="P:chemical synaptic transmission"/>
    <property type="evidence" value="ECO:0000304"/>
    <property type="project" value="ProtInc"/>
</dbReference>
<dbReference type="GO" id="GO:0006897">
    <property type="term" value="P:endocytosis"/>
    <property type="evidence" value="ECO:0007669"/>
    <property type="project" value="UniProtKB-KW"/>
</dbReference>
<dbReference type="GO" id="GO:0042953">
    <property type="term" value="P:lipoprotein transport"/>
    <property type="evidence" value="ECO:0000314"/>
    <property type="project" value="UniProtKB"/>
</dbReference>
<dbReference type="GO" id="GO:0000281">
    <property type="term" value="P:mitotic cytokinesis"/>
    <property type="evidence" value="ECO:0000315"/>
    <property type="project" value="UniProtKB"/>
</dbReference>
<dbReference type="GO" id="GO:2001287">
    <property type="term" value="P:negative regulation of caveolin-mediated endocytosis"/>
    <property type="evidence" value="ECO:0000250"/>
    <property type="project" value="UniProtKB"/>
</dbReference>
<dbReference type="GO" id="GO:1900186">
    <property type="term" value="P:negative regulation of clathrin-dependent endocytosis"/>
    <property type="evidence" value="ECO:0000250"/>
    <property type="project" value="UniProtKB"/>
</dbReference>
<dbReference type="GO" id="GO:0007399">
    <property type="term" value="P:nervous system development"/>
    <property type="evidence" value="ECO:0000318"/>
    <property type="project" value="GO_Central"/>
</dbReference>
<dbReference type="GO" id="GO:0007602">
    <property type="term" value="P:phototransduction"/>
    <property type="evidence" value="ECO:0000304"/>
    <property type="project" value="ProtInc"/>
</dbReference>
<dbReference type="GO" id="GO:0061098">
    <property type="term" value="P:positive regulation of protein tyrosine kinase activity"/>
    <property type="evidence" value="ECO:0000315"/>
    <property type="project" value="UniProtKB"/>
</dbReference>
<dbReference type="GO" id="GO:0007601">
    <property type="term" value="P:visual perception"/>
    <property type="evidence" value="ECO:0000304"/>
    <property type="project" value="ProtInc"/>
</dbReference>
<dbReference type="FunFam" id="2.70.50.40:FF:000001">
    <property type="entry name" value="protein unc-119 homolog A"/>
    <property type="match status" value="1"/>
</dbReference>
<dbReference type="Gene3D" id="2.70.50.40">
    <property type="entry name" value="GMP phosphodiesterase, delta subunit"/>
    <property type="match status" value="1"/>
</dbReference>
<dbReference type="InterPro" id="IPR014756">
    <property type="entry name" value="Ig_E-set"/>
</dbReference>
<dbReference type="InterPro" id="IPR051519">
    <property type="entry name" value="PDE6D_unc-119_myristoyl-bd"/>
</dbReference>
<dbReference type="InterPro" id="IPR008015">
    <property type="entry name" value="PDED_dom"/>
</dbReference>
<dbReference type="InterPro" id="IPR037036">
    <property type="entry name" value="PDED_dom_sf"/>
</dbReference>
<dbReference type="PANTHER" id="PTHR12951:SF5">
    <property type="entry name" value="PROTEIN UNC-119 HOMOLOG A"/>
    <property type="match status" value="1"/>
</dbReference>
<dbReference type="PANTHER" id="PTHR12951">
    <property type="entry name" value="RETINAL PROTEIN 4"/>
    <property type="match status" value="1"/>
</dbReference>
<dbReference type="Pfam" id="PF05351">
    <property type="entry name" value="GMP_PDE_delta"/>
    <property type="match status" value="1"/>
</dbReference>
<dbReference type="SUPFAM" id="SSF81296">
    <property type="entry name" value="E set domains"/>
    <property type="match status" value="1"/>
</dbReference>
<comment type="function">
    <text evidence="5 6 8 9 10 13 25">Involved in synaptic functions in photoreceptor cells, the signal transduction in immune cells as a Src family kinase activator, endosome recycling, the uptake of bacteria and endocytosis, protein trafficking in sensory neurons and as lipid-binding chaperone with specificity for a diverse subset of myristoylated proteins. Specifically binds the myristoyl moiety of a subset of N-terminally myristoylated proteins and is required for their localization. Binds myristoylated GNAT1 and is required for G-protein localization and trafficking in sensory neurons. Probably plays a role in trafficking proteins in photoreceptor cells. Plays important roles in mediating Src family kinase signals for the completion of cytokinesis via RAB11A.</text>
</comment>
<comment type="subunit">
    <text evidence="1 4 5 6 7 8 9 10 12 13 14 15 17">Interacts with CABP4; in the absence of calcium (By similarity). Interacts with DNM1; leading to a decrease of DNM1 GTPase activity (By similarity). May interact with GTP-bound ARL1. Interacts with ARL2 and ARL3 (GTP-bound forms); this promotes the release of myyristoylated cargo proteins (PubMed:22960633, PubMed:30945270). Found in a complex with ARL3, RP2 and UNC119; RP2 induces hydrolysis of GTP ARL3 in the complex, leading to the release of UNC119. Interacts with NPHP3 (when myristoylated). Interacts with CYS1 (when myristoylated). Interacts with MACIR; interaction only takes place when UNC119 is not liganded with myristoylated proteins. Interacts with LCK; this interaction plays a crucial role in activation of LCK. Interacts with FYN. Interacts with RAB11A; in a cell cycle-dependent manner. Interacts with LYN (via SH2 and SH3 domains); leading to LYN activation. Found in a complex with ABL1, ABL2, CRK and UNC119; leading to the inhibition of CRK phosphorylation by ABL kinases. Interacts with CD44; leading to Shigella invasion. Interacts with KLHL18 (via kelch repeats) (PubMed:31696965). Interacts with PPP3CA, PPP3CB and PPP3CC (By similarity). Interacts with USP48; this interaction promotes UNC119 stability (PubMed:36293380).</text>
</comment>
<comment type="interaction">
    <interactant intactId="EBI-711260">
        <id>Q13432</id>
    </interactant>
    <interactant intactId="EBI-17286414">
        <id>A2BDD9</id>
        <label>AMOT</label>
    </interactant>
    <organismsDiffer>false</organismsDiffer>
    <experiments>3</experiments>
</comment>
<comment type="interaction">
    <interactant intactId="EBI-711260">
        <id>Q13432</id>
    </interactant>
    <interactant intactId="EBI-3891843">
        <id>Q4VCS5-2</id>
        <label>AMOT</label>
    </interactant>
    <organismsDiffer>false</organismsDiffer>
    <experiments>3</experiments>
</comment>
<comment type="interaction">
    <interactant intactId="EBI-711260">
        <id>Q13432</id>
    </interactant>
    <interactant intactId="EBI-711759">
        <id>Q9NXU5</id>
        <label>ARL15</label>
    </interactant>
    <organismsDiffer>false</organismsDiffer>
    <experiments>4</experiments>
</comment>
<comment type="interaction">
    <interactant intactId="EBI-711260">
        <id>Q13432</id>
    </interactant>
    <interactant intactId="EBI-752365">
        <id>P36404</id>
        <label>ARL2</label>
    </interactant>
    <organismsDiffer>false</organismsDiffer>
    <experiments>11</experiments>
</comment>
<comment type="interaction">
    <interactant intactId="EBI-711260">
        <id>Q13432</id>
    </interactant>
    <interactant intactId="EBI-712710">
        <id>P36405</id>
        <label>ARL3</label>
    </interactant>
    <organismsDiffer>false</organismsDiffer>
    <experiments>15</experiments>
</comment>
<comment type="interaction">
    <interactant intactId="EBI-711260">
        <id>Q13432</id>
    </interactant>
    <interactant intactId="EBI-745814">
        <id>Q96GX8</id>
        <label>C16orf74</label>
    </interactant>
    <organismsDiffer>false</organismsDiffer>
    <experiments>7</experiments>
</comment>
<comment type="interaction">
    <interactant intactId="EBI-711260">
        <id>Q13432</id>
    </interactant>
    <interactant intactId="EBI-349854">
        <id>P13569</id>
        <label>CFTR</label>
    </interactant>
    <organismsDiffer>false</organismsDiffer>
    <experiments>4</experiments>
</comment>
<comment type="interaction">
    <interactant intactId="EBI-711260">
        <id>Q13432</id>
    </interactant>
    <interactant intactId="EBI-11749135">
        <id>Q8IUG1</id>
        <label>KRTAP1-3</label>
    </interactant>
    <organismsDiffer>false</organismsDiffer>
    <experiments>3</experiments>
</comment>
<comment type="interaction">
    <interactant intactId="EBI-711260">
        <id>Q13432</id>
    </interactant>
    <interactant intactId="EBI-1043191">
        <id>Q9BYQ3</id>
        <label>KRTAP9-3</label>
    </interactant>
    <organismsDiffer>false</organismsDiffer>
    <experiments>3</experiments>
</comment>
<comment type="interaction">
    <interactant intactId="EBI-711260">
        <id>Q13432</id>
    </interactant>
    <interactant intactId="EBI-11958364">
        <id>Q9BYQ0</id>
        <label>KRTAP9-8</label>
    </interactant>
    <organismsDiffer>false</organismsDiffer>
    <experiments>3</experiments>
</comment>
<comment type="interaction">
    <interactant intactId="EBI-711260">
        <id>Q13432</id>
    </interactant>
    <interactant intactId="EBI-473196">
        <id>Q5T3J3</id>
        <label>LRIF1</label>
    </interactant>
    <organismsDiffer>false</organismsDiffer>
    <experiments>3</experiments>
</comment>
<comment type="interaction">
    <interactant intactId="EBI-711260">
        <id>Q13432</id>
    </interactant>
    <interactant intactId="EBI-2804263">
        <id>Q7Z494</id>
        <label>NPHP3</label>
    </interactant>
    <organismsDiffer>false</organismsDiffer>
    <experiments>6</experiments>
</comment>
<comment type="interaction">
    <interactant intactId="EBI-711260">
        <id>Q13432</id>
    </interactant>
    <interactant intactId="EBI-11959013">
        <id>Q08209-2</id>
        <label>PPP3CA</label>
    </interactant>
    <organismsDiffer>false</organismsDiffer>
    <experiments>5</experiments>
</comment>
<comment type="interaction">
    <interactant intactId="EBI-711260">
        <id>Q13432</id>
    </interactant>
    <interactant intactId="EBI-2827192">
        <id>P48454</id>
        <label>PPP3CC</label>
    </interactant>
    <organismsDiffer>false</organismsDiffer>
    <experiments>3</experiments>
</comment>
<comment type="interaction">
    <interactant intactId="EBI-711260">
        <id>Q13432</id>
    </interactant>
    <interactant intactId="EBI-11987469">
        <id>Q6ZRY4</id>
        <label>RBPMS2</label>
    </interactant>
    <organismsDiffer>false</organismsDiffer>
    <experiments>3</experiments>
</comment>
<comment type="interaction">
    <interactant intactId="EBI-711260">
        <id>Q13432</id>
    </interactant>
    <interactant intactId="EBI-9091952">
        <id>Q9UKA8</id>
        <label>RCAN3</label>
    </interactant>
    <organismsDiffer>false</organismsDiffer>
    <experiments>3</experiments>
</comment>
<comment type="interaction">
    <interactant intactId="EBI-711260">
        <id>Q13432</id>
    </interactant>
    <interactant intactId="EBI-11732844">
        <id>Q86VY9</id>
        <label>TMEM200A</label>
    </interactant>
    <organismsDiffer>false</organismsDiffer>
    <experiments>3</experiments>
</comment>
<comment type="interaction">
    <interactant intactId="EBI-711260">
        <id>Q13432</id>
    </interactant>
    <interactant intactId="EBI-9986117">
        <id>Q96A56</id>
        <label>TP53INP1</label>
    </interactant>
    <organismsDiffer>false</organismsDiffer>
    <experiments>3</experiments>
</comment>
<comment type="interaction">
    <interactant intactId="EBI-711260">
        <id>Q13432</id>
    </interactant>
    <interactant intactId="EBI-1033319">
        <id>Q9D0J4</id>
        <label>Arl2</label>
    </interactant>
    <organismsDiffer>true</organismsDiffer>
    <experiments>2</experiments>
</comment>
<comment type="interaction">
    <interactant intactId="EBI-711260">
        <id>Q13432</id>
    </interactant>
    <interactant intactId="EBI-6860857">
        <id>Q9WUL7</id>
        <label>Arl3</label>
    </interactant>
    <organismsDiffer>true</organismsDiffer>
    <experiments>3</experiments>
</comment>
<comment type="subcellular location">
    <subcellularLocation>
        <location evidence="13">Cytoplasm</location>
        <location evidence="13">Cytoskeleton</location>
        <location evidence="13">Microtubule organizing center</location>
        <location evidence="13">Centrosome</location>
    </subcellularLocation>
    <subcellularLocation>
        <location evidence="13">Cytoplasm</location>
        <location evidence="13">Cytoskeleton</location>
        <location evidence="13">Spindle pole</location>
    </subcellularLocation>
    <subcellularLocation>
        <location evidence="13">Cytoplasm</location>
        <location evidence="13">Cytoskeleton</location>
        <location evidence="13">Spindle</location>
    </subcellularLocation>
    <text evidence="13">Localizes to the centrosome in interphase cells and begins to translocate from the spindle pole to the spindle midzone after the onset of mitosis; it then localizes to the intercellular bridge in telophase cells and to the midbody in cytokinetic cells.</text>
</comment>
<comment type="alternative products">
    <event type="alternative splicing"/>
    <isoform>
        <id>Q13432-1</id>
        <name>A</name>
        <sequence type="displayed"/>
    </isoform>
    <isoform>
        <id>Q13432-2</id>
        <name>B</name>
        <sequence type="described" ref="VSP_004545"/>
    </isoform>
</comment>
<comment type="tissue specificity">
    <text evidence="18">Abundantly expressed in retina, in photoreceptor synapses and inner segments. Expressed in a much lesser extent in several other tissues.</text>
</comment>
<comment type="domain">
    <text evidence="9 10">Adopts an immunoglobulin-like beta-sandwich fold forming a hydrophobic cavity that captures N-terminally myristoylated target peptides (PubMed:21642972). Phe residues within the hydrophobic beta sandwich are required for myristate binding (PubMed:22085962).</text>
</comment>
<comment type="PTM">
    <text evidence="15">Phosphorylation suppresses its interaction with KLHL18 and down-regulates its KLHL18-mediated degradation (PubMed:31696965). Phosphorylated more under light conditions than dark conditions (PubMed:31696965). Dephosphorylated by calcineurin (PubMed:31696965).</text>
</comment>
<comment type="disease" evidence="11">
    <disease id="DI-03941">
        <name>Immunodeficiency 13</name>
        <acronym>IMD13</acronym>
        <description>A rare and heterogeneous syndrome defined by a reproducible reduction in the CD4 T-lymphocyte count (less than 300 cells per microliter or less than 20% of total T-cells) in the absence of HIV infection or other known causes of immunodeficiency. IMD13 predisposes to infections and malignancy.</description>
        <dbReference type="MIM" id="615518"/>
    </disease>
    <text>The disease may be caused by variants affecting the gene represented in this entry.</text>
</comment>
<comment type="disease" evidence="3 16">
    <disease id="DI-06663">
        <name>Cone-rod dystrophy 24</name>
        <acronym>CORD24</acronym>
        <description>An autosomal dominant form of cone-rod dystrophy, an inherited retinal dystrophy characterized by retinal pigment deposits visible on fundus examination, predominantly in the macular region, and initial loss of cone photoreceptors followed by rod degeneration. This leads to decreased visual acuity and sensitivity in the central visual field, followed by loss of peripheral vision. Severe loss of vision occurs earlier than in retinitis pigmentosa, due to cone photoreceptors degenerating at a higher rate than rod photoreceptors.</description>
        <dbReference type="MIM" id="620342"/>
    </disease>
    <text>The disease is caused by variants affecting the gene represented in this entry.</text>
</comment>
<comment type="similarity">
    <text evidence="22">Belongs to the PDE6D/unc-119 family.</text>
</comment>
<comment type="caution">
    <text evidence="23 24">According to some authors, acts by extracting target proteins from membranes (PubMed:21642972). According to a another report, rather acts by targeting proteins to membranes (PubMed:22085962).</text>
</comment>
<reference key="1">
    <citation type="journal article" date="1996" name="J. Biol. Chem.">
        <title>Cloning of the cDNA for a novel photoreceptor protein.</title>
        <authorList>
            <person name="Higashide T."/>
            <person name="Murakami A."/>
            <person name="McLaren M.J."/>
            <person name="Inana G."/>
        </authorList>
    </citation>
    <scope>NUCLEOTIDE SEQUENCE [MRNA] (ISOFORM A)</scope>
    <source>
        <tissue>Retina</tissue>
    </source>
</reference>
<reference key="2">
    <citation type="journal article" date="1998" name="Invest. Ophthalmol. Vis. Sci.">
        <title>Mammalian orthologs of C. elegans unc-119 highly expressed in photoreceptors.</title>
        <authorList>
            <person name="Swanson D.A."/>
            <person name="Chang J.T."/>
            <person name="Campochiaro P.A."/>
            <person name="Zack D.J."/>
            <person name="Valle D."/>
        </authorList>
    </citation>
    <scope>NUCLEOTIDE SEQUENCE [MRNA] (ISOFORMS A AND B)</scope>
    <scope>TISSUE SPECIFICITY</scope>
    <source>
        <tissue>Retina</tissue>
    </source>
</reference>
<reference key="3">
    <citation type="journal article" date="1999" name="Genomics">
        <title>Characterization of the gene for HRG4 (UNC119), a novel photoreceptor synaptic protein homologous to unc-119.</title>
        <authorList>
            <person name="Higashide T."/>
            <person name="Inana G."/>
        </authorList>
    </citation>
    <scope>NUCLEOTIDE SEQUENCE [GENOMIC DNA] (ISOFORM A)</scope>
</reference>
<reference key="4">
    <citation type="journal article" date="2004" name="Nat. Genet.">
        <title>Complete sequencing and characterization of 21,243 full-length human cDNAs.</title>
        <authorList>
            <person name="Ota T."/>
            <person name="Suzuki Y."/>
            <person name="Nishikawa T."/>
            <person name="Otsuki T."/>
            <person name="Sugiyama T."/>
            <person name="Irie R."/>
            <person name="Wakamatsu A."/>
            <person name="Hayashi K."/>
            <person name="Sato H."/>
            <person name="Nagai K."/>
            <person name="Kimura K."/>
            <person name="Makita H."/>
            <person name="Sekine M."/>
            <person name="Obayashi M."/>
            <person name="Nishi T."/>
            <person name="Shibahara T."/>
            <person name="Tanaka T."/>
            <person name="Ishii S."/>
            <person name="Yamamoto J."/>
            <person name="Saito K."/>
            <person name="Kawai Y."/>
            <person name="Isono Y."/>
            <person name="Nakamura Y."/>
            <person name="Nagahari K."/>
            <person name="Murakami K."/>
            <person name="Yasuda T."/>
            <person name="Iwayanagi T."/>
            <person name="Wagatsuma M."/>
            <person name="Shiratori A."/>
            <person name="Sudo H."/>
            <person name="Hosoiri T."/>
            <person name="Kaku Y."/>
            <person name="Kodaira H."/>
            <person name="Kondo H."/>
            <person name="Sugawara M."/>
            <person name="Takahashi M."/>
            <person name="Kanda K."/>
            <person name="Yokoi T."/>
            <person name="Furuya T."/>
            <person name="Kikkawa E."/>
            <person name="Omura Y."/>
            <person name="Abe K."/>
            <person name="Kamihara K."/>
            <person name="Katsuta N."/>
            <person name="Sato K."/>
            <person name="Tanikawa M."/>
            <person name="Yamazaki M."/>
            <person name="Ninomiya K."/>
            <person name="Ishibashi T."/>
            <person name="Yamashita H."/>
            <person name="Murakawa K."/>
            <person name="Fujimori K."/>
            <person name="Tanai H."/>
            <person name="Kimata M."/>
            <person name="Watanabe M."/>
            <person name="Hiraoka S."/>
            <person name="Chiba Y."/>
            <person name="Ishida S."/>
            <person name="Ono Y."/>
            <person name="Takiguchi S."/>
            <person name="Watanabe S."/>
            <person name="Yosida M."/>
            <person name="Hotuta T."/>
            <person name="Kusano J."/>
            <person name="Kanehori K."/>
            <person name="Takahashi-Fujii A."/>
            <person name="Hara H."/>
            <person name="Tanase T.-O."/>
            <person name="Nomura Y."/>
            <person name="Togiya S."/>
            <person name="Komai F."/>
            <person name="Hara R."/>
            <person name="Takeuchi K."/>
            <person name="Arita M."/>
            <person name="Imose N."/>
            <person name="Musashino K."/>
            <person name="Yuuki H."/>
            <person name="Oshima A."/>
            <person name="Sasaki N."/>
            <person name="Aotsuka S."/>
            <person name="Yoshikawa Y."/>
            <person name="Matsunawa H."/>
            <person name="Ichihara T."/>
            <person name="Shiohata N."/>
            <person name="Sano S."/>
            <person name="Moriya S."/>
            <person name="Momiyama H."/>
            <person name="Satoh N."/>
            <person name="Takami S."/>
            <person name="Terashima Y."/>
            <person name="Suzuki O."/>
            <person name="Nakagawa S."/>
            <person name="Senoh A."/>
            <person name="Mizoguchi H."/>
            <person name="Goto Y."/>
            <person name="Shimizu F."/>
            <person name="Wakebe H."/>
            <person name="Hishigaki H."/>
            <person name="Watanabe T."/>
            <person name="Sugiyama A."/>
            <person name="Takemoto M."/>
            <person name="Kawakami B."/>
            <person name="Yamazaki M."/>
            <person name="Watanabe K."/>
            <person name="Kumagai A."/>
            <person name="Itakura S."/>
            <person name="Fukuzumi Y."/>
            <person name="Fujimori Y."/>
            <person name="Komiyama M."/>
            <person name="Tashiro H."/>
            <person name="Tanigami A."/>
            <person name="Fujiwara T."/>
            <person name="Ono T."/>
            <person name="Yamada K."/>
            <person name="Fujii Y."/>
            <person name="Ozaki K."/>
            <person name="Hirao M."/>
            <person name="Ohmori Y."/>
            <person name="Kawabata A."/>
            <person name="Hikiji T."/>
            <person name="Kobatake N."/>
            <person name="Inagaki H."/>
            <person name="Ikema Y."/>
            <person name="Okamoto S."/>
            <person name="Okitani R."/>
            <person name="Kawakami T."/>
            <person name="Noguchi S."/>
            <person name="Itoh T."/>
            <person name="Shigeta K."/>
            <person name="Senba T."/>
            <person name="Matsumura K."/>
            <person name="Nakajima Y."/>
            <person name="Mizuno T."/>
            <person name="Morinaga M."/>
            <person name="Sasaki M."/>
            <person name="Togashi T."/>
            <person name="Oyama M."/>
            <person name="Hata H."/>
            <person name="Watanabe M."/>
            <person name="Komatsu T."/>
            <person name="Mizushima-Sugano J."/>
            <person name="Satoh T."/>
            <person name="Shirai Y."/>
            <person name="Takahashi Y."/>
            <person name="Nakagawa K."/>
            <person name="Okumura K."/>
            <person name="Nagase T."/>
            <person name="Nomura N."/>
            <person name="Kikuchi H."/>
            <person name="Masuho Y."/>
            <person name="Yamashita R."/>
            <person name="Nakai K."/>
            <person name="Yada T."/>
            <person name="Nakamura Y."/>
            <person name="Ohara O."/>
            <person name="Isogai T."/>
            <person name="Sugano S."/>
        </authorList>
    </citation>
    <scope>NUCLEOTIDE SEQUENCE [LARGE SCALE MRNA] (ISOFORM B)</scope>
    <source>
        <tissue>Testis</tissue>
    </source>
</reference>
<reference key="5">
    <citation type="journal article" date="2011" name="Invest. Ophthalmol. Vis. Sci.">
        <title>Full-length transcriptome analysis of human retina-derived cell lines ARPE-19 and Y79 using the vector-capping method.</title>
        <authorList>
            <person name="Oshikawa M."/>
            <person name="Tsutsui C."/>
            <person name="Ikegami T."/>
            <person name="Fuchida Y."/>
            <person name="Matsubara M."/>
            <person name="Toyama S."/>
            <person name="Usami R."/>
            <person name="Ohtoko K."/>
            <person name="Kato S."/>
        </authorList>
    </citation>
    <scope>NUCLEOTIDE SEQUENCE [LARGE SCALE MRNA] (ISOFORM B)</scope>
    <source>
        <tissue>Retinoblastoma</tissue>
    </source>
</reference>
<reference key="6">
    <citation type="journal article" date="2006" name="Nature">
        <title>DNA sequence of human chromosome 17 and analysis of rearrangement in the human lineage.</title>
        <authorList>
            <person name="Zody M.C."/>
            <person name="Garber M."/>
            <person name="Adams D.J."/>
            <person name="Sharpe T."/>
            <person name="Harrow J."/>
            <person name="Lupski J.R."/>
            <person name="Nicholson C."/>
            <person name="Searle S.M."/>
            <person name="Wilming L."/>
            <person name="Young S.K."/>
            <person name="Abouelleil A."/>
            <person name="Allen N.R."/>
            <person name="Bi W."/>
            <person name="Bloom T."/>
            <person name="Borowsky M.L."/>
            <person name="Bugalter B.E."/>
            <person name="Butler J."/>
            <person name="Chang J.L."/>
            <person name="Chen C.-K."/>
            <person name="Cook A."/>
            <person name="Corum B."/>
            <person name="Cuomo C.A."/>
            <person name="de Jong P.J."/>
            <person name="DeCaprio D."/>
            <person name="Dewar K."/>
            <person name="FitzGerald M."/>
            <person name="Gilbert J."/>
            <person name="Gibson R."/>
            <person name="Gnerre S."/>
            <person name="Goldstein S."/>
            <person name="Grafham D.V."/>
            <person name="Grocock R."/>
            <person name="Hafez N."/>
            <person name="Hagopian D.S."/>
            <person name="Hart E."/>
            <person name="Norman C.H."/>
            <person name="Humphray S."/>
            <person name="Jaffe D.B."/>
            <person name="Jones M."/>
            <person name="Kamal M."/>
            <person name="Khodiyar V.K."/>
            <person name="LaButti K."/>
            <person name="Laird G."/>
            <person name="Lehoczky J."/>
            <person name="Liu X."/>
            <person name="Lokyitsang T."/>
            <person name="Loveland J."/>
            <person name="Lui A."/>
            <person name="Macdonald P."/>
            <person name="Major J.E."/>
            <person name="Matthews L."/>
            <person name="Mauceli E."/>
            <person name="McCarroll S.A."/>
            <person name="Mihalev A.H."/>
            <person name="Mudge J."/>
            <person name="Nguyen C."/>
            <person name="Nicol R."/>
            <person name="O'Leary S.B."/>
            <person name="Osoegawa K."/>
            <person name="Schwartz D.C."/>
            <person name="Shaw-Smith C."/>
            <person name="Stankiewicz P."/>
            <person name="Steward C."/>
            <person name="Swarbreck D."/>
            <person name="Venkataraman V."/>
            <person name="Whittaker C.A."/>
            <person name="Yang X."/>
            <person name="Zimmer A.R."/>
            <person name="Bradley A."/>
            <person name="Hubbard T."/>
            <person name="Birren B.W."/>
            <person name="Rogers J."/>
            <person name="Lander E.S."/>
            <person name="Nusbaum C."/>
        </authorList>
    </citation>
    <scope>NUCLEOTIDE SEQUENCE [LARGE SCALE GENOMIC DNA]</scope>
</reference>
<reference key="7">
    <citation type="submission" date="2005-07" db="EMBL/GenBank/DDBJ databases">
        <authorList>
            <person name="Mural R.J."/>
            <person name="Istrail S."/>
            <person name="Sutton G.G."/>
            <person name="Florea L."/>
            <person name="Halpern A.L."/>
            <person name="Mobarry C.M."/>
            <person name="Lippert R."/>
            <person name="Walenz B."/>
            <person name="Shatkay H."/>
            <person name="Dew I."/>
            <person name="Miller J.R."/>
            <person name="Flanigan M.J."/>
            <person name="Edwards N.J."/>
            <person name="Bolanos R."/>
            <person name="Fasulo D."/>
            <person name="Halldorsson B.V."/>
            <person name="Hannenhalli S."/>
            <person name="Turner R."/>
            <person name="Yooseph S."/>
            <person name="Lu F."/>
            <person name="Nusskern D.R."/>
            <person name="Shue B.C."/>
            <person name="Zheng X.H."/>
            <person name="Zhong F."/>
            <person name="Delcher A.L."/>
            <person name="Huson D.H."/>
            <person name="Kravitz S.A."/>
            <person name="Mouchard L."/>
            <person name="Reinert K."/>
            <person name="Remington K.A."/>
            <person name="Clark A.G."/>
            <person name="Waterman M.S."/>
            <person name="Eichler E.E."/>
            <person name="Adams M.D."/>
            <person name="Hunkapiller M.W."/>
            <person name="Myers E.W."/>
            <person name="Venter J.C."/>
        </authorList>
    </citation>
    <scope>NUCLEOTIDE SEQUENCE [LARGE SCALE GENOMIC DNA]</scope>
</reference>
<reference key="8">
    <citation type="journal article" date="2004" name="Genome Res.">
        <title>The status, quality, and expansion of the NIH full-length cDNA project: the Mammalian Gene Collection (MGC).</title>
        <authorList>
            <consortium name="The MGC Project Team"/>
        </authorList>
    </citation>
    <scope>NUCLEOTIDE SEQUENCE [LARGE SCALE MRNA] (ISOFORM A)</scope>
    <source>
        <tissue>Lymph</tissue>
    </source>
</reference>
<reference key="9">
    <citation type="journal article" date="2001" name="J. Biol. Chem.">
        <title>ADP-ribosylation factors (ARFs) and ARF-like 1 (ARL1) have both specific and shared effectors: characterizing ARL1-binding proteins.</title>
        <authorList>
            <person name="Van Valkenburgh H."/>
            <person name="Shern J.F."/>
            <person name="Sharer J.D."/>
            <person name="Zhu X."/>
            <person name="Kahn R.A."/>
        </authorList>
    </citation>
    <scope>INTERACTION WITH ARL1; ARL2 AND ARL3</scope>
</reference>
<reference key="10">
    <citation type="journal article" date="2003" name="J. Biol. Chem.">
        <title>Identification of UNC119 as a novel activator of SRC-type tyrosine kinases.</title>
        <authorList>
            <person name="Cen O."/>
            <person name="Gorska M.M."/>
            <person name="Stafford S.J."/>
            <person name="Sur S."/>
            <person name="Alam R."/>
        </authorList>
    </citation>
    <scope>INTERACTION WITH LYN</scope>
    <scope>FUNCTION IN LYN ACTIVATION</scope>
</reference>
<reference key="11">
    <citation type="journal article" date="2004" name="J. Exp. Med.">
        <title>Unc119, a novel activator of Lck/Fyn, is essential for T cell activation.</title>
        <authorList>
            <person name="Gorska M.M."/>
            <person name="Stafford S.J."/>
            <person name="Cen O."/>
            <person name="Sur S."/>
            <person name="Alam R."/>
        </authorList>
    </citation>
    <scope>INTERACTION WITH LCK AND FYN</scope>
    <scope>FUNCTION IN LCK AND FYN ACTIVATION</scope>
    <scope>MUTAGENESIS OF 29-PRO--PRO-32</scope>
</reference>
<reference key="12">
    <citation type="journal article" date="2008" name="FEBS Lett.">
        <title>Specificity of Arl2/Arl3 signaling is mediated by a ternary Arl3-effector-GAP complex.</title>
        <authorList>
            <person name="Veltel S."/>
            <person name="Kravchenko A."/>
            <person name="Ismail S."/>
            <person name="Wittinghofer A."/>
        </authorList>
    </citation>
    <scope>IDENTIFICATION IN A COMPLEX WITH ARL3 AND RP2</scope>
</reference>
<reference key="13">
    <citation type="journal article" date="2009" name="PLoS ONE">
        <title>Unc119 protects from Shigella infection by inhibiting the Abl family kinases.</title>
        <authorList>
            <person name="Vepachedu R."/>
            <person name="Karim Z."/>
            <person name="Patel O."/>
            <person name="Goplen N."/>
            <person name="Alam R."/>
        </authorList>
    </citation>
    <scope>INTERACTION WITH CD44</scope>
    <scope>IDENTIFICATION IN A COMPLEX WITH ABL1; ABL2 AND CRK</scope>
    <scope>FUNCTION IN SHIGELLA FLEXNERI UPTAKE</scope>
</reference>
<reference key="14">
    <citation type="journal article" date="2011" name="Genes Dev.">
        <title>An ARL3-UNC119-RP2 GTPase cycle targets myristoylated NPHP3 to the primary cilium.</title>
        <authorList>
            <person name="Wright K.J."/>
            <person name="Baye L.M."/>
            <person name="Olivier-Mason A."/>
            <person name="Mukhopadhyay S."/>
            <person name="Sang L."/>
            <person name="Kwong M."/>
            <person name="Wang W."/>
            <person name="Pretorius P.R."/>
            <person name="Sheffield V.C."/>
            <person name="Sengupta P."/>
            <person name="Slusarski D.C."/>
            <person name="Jackson P.K."/>
        </authorList>
    </citation>
    <scope>FUNCTION</scope>
    <scope>LIPID-BINDING</scope>
    <scope>INTERACTION WITH NPHP3; CYS1 AND MACIR</scope>
</reference>
<reference key="15">
    <citation type="journal article" date="2013" name="Cell Cycle">
        <title>UNC119a bridges the transmission of Fyn signals to Rab11, leading to the completion of cytokinesis.</title>
        <authorList>
            <person name="Lee Y."/>
            <person name="Chung S."/>
            <person name="Baek I.K."/>
            <person name="Lee T.H."/>
            <person name="Paik S.Y."/>
            <person name="Lee J."/>
        </authorList>
    </citation>
    <scope>SUBCELLULAR LOCATION</scope>
    <scope>INTERACTION WITH FYN AND RAB11A</scope>
    <scope>FUNCTION IN ACTIVATION OF FYN</scope>
</reference>
<reference key="16">
    <citation type="journal article" date="2019" name="Clin. Genet.">
        <title>Whole-exome sequencing identified ARL2 as a novel candidate gene for MRCS (microcornea, rod-cone dystrophy, cataract, and posterior staphyloma) syndrome.</title>
        <authorList>
            <person name="Cai X.B."/>
            <person name="Wu K.C."/>
            <person name="Zhang X."/>
            <person name="Lv J.N."/>
            <person name="Jin G.H."/>
            <person name="Xiang L."/>
            <person name="Chen J."/>
            <person name="Huang X.F."/>
            <person name="Pan D."/>
            <person name="Lu B."/>
            <person name="Lu F."/>
            <person name="Qu J."/>
            <person name="Jin Z.B."/>
        </authorList>
    </citation>
    <scope>INTERACTION WITH ARL2</scope>
</reference>
<reference key="17">
    <citation type="journal article" date="2019" name="EMBO J.">
        <title>Cul3-Klhl18 ubiquitin ligase modulates rod transducin translocation during light-dark adaptation.</title>
        <authorList>
            <person name="Chaya T."/>
            <person name="Tsutsumi R."/>
            <person name="Varner L.R."/>
            <person name="Maeda Y."/>
            <person name="Yoshida S."/>
            <person name="Furukawa T."/>
        </authorList>
    </citation>
    <scope>PHOSPHORYLATION AT SER-37; SER-39 AND SER-41</scope>
    <scope>MUTAGENESIS OF SER-37; SER-39 AND SER-41</scope>
    <scope>INTERACTION WITH KLHL18</scope>
</reference>
<reference key="18">
    <citation type="journal article" date="2022" name="Int. J. Mol. Sci.">
        <title>The Deubiquitinating Enzyme USP48 Interacts with the Retinal Degeneration-Associated Proteins UNC119a and ARL3.</title>
        <authorList>
            <person name="Sanchez-Bellver L."/>
            <person name="Ferriz-Gordillo A."/>
            <person name="Carrillo-Pz M."/>
            <person name="Rabanal L."/>
            <person name="Garcia-Gonzalo F.R."/>
            <person name="Marfany G."/>
        </authorList>
    </citation>
    <scope>INTERACTION WITH USP48</scope>
</reference>
<reference key="19">
    <citation type="journal article" date="2011" name="Nat. Neurosci.">
        <title>UNC119 is required for G protein trafficking in sensory neurons.</title>
        <authorList>
            <person name="Zhang H."/>
            <person name="Constantine R."/>
            <person name="Vorobiev S."/>
            <person name="Chen Y."/>
            <person name="Seetharaman J."/>
            <person name="Huang Y.J."/>
            <person name="Xiao R."/>
            <person name="Montelione G.T."/>
            <person name="Gerstner C.D."/>
            <person name="Davis M.W."/>
            <person name="Inana G."/>
            <person name="Whitby F.G."/>
            <person name="Jorgensen E.M."/>
            <person name="Hill C.P."/>
            <person name="Tong L."/>
            <person name="Baehr W."/>
        </authorList>
    </citation>
    <scope>X-RAY CRYSTALLOGRAPHY (1.94 ANGSTROMS) OF 56-240 IN COMPLEX WITH LAURYLATED GNAT1</scope>
    <scope>FUNCTION</scope>
    <scope>INTERACTION WITH GNAT1</scope>
</reference>
<reference key="20">
    <citation type="journal article" date="2012" name="EMBO J.">
        <title>Structural basis for Arl3-specific release of myristoylated ciliary cargo from UNC119.</title>
        <authorList>
            <person name="Ismail S.A."/>
            <person name="Chen Y.X."/>
            <person name="Miertzschke M."/>
            <person name="Vetter I.R."/>
            <person name="Koerner C."/>
            <person name="Wittinghofer A."/>
        </authorList>
    </citation>
    <scope>X-RAY CRYSTALLOGRAPHY (2.10 ANGSTROMS) IN COMPLEX WITH ARL2 AND ARL3</scope>
    <scope>INTERACTION WITH ARL2 AND ARL3</scope>
</reference>
<reference key="21">
    <citation type="journal article" date="2000" name="Invest. Ophthalmol. Vis. Sci.">
        <title>HRG4 (UNC119) mutation found in cone-rod dystrophy causes retinal degeneration in a transgenic model.</title>
        <authorList>
            <person name="Kobayashi A."/>
            <person name="Higashide T."/>
            <person name="Hamasaki D."/>
            <person name="Kubota S."/>
            <person name="Sakuma H."/>
            <person name="An W."/>
            <person name="Fujimaki T."/>
            <person name="McLaren M.J."/>
            <person name="Weleber R.G."/>
            <person name="Inana G."/>
        </authorList>
    </citation>
    <scope>VARIANT CORD24 57-LYS--PRO-240 DEL</scope>
    <scope>CHARACTERIZATION OF VARIANT CORD24 57-LYS--PRO-240 DEL</scope>
    <scope>INVOLVEMENT IN CORD24</scope>
</reference>
<reference key="22">
    <citation type="journal article" date="2012" name="Blood">
        <title>A mutation in the human Uncoordinated 119 gene impairs TCR signaling and is associated with CD4 lymphopenia.</title>
        <authorList>
            <person name="Gorska M.M."/>
            <person name="Alam R."/>
        </authorList>
    </citation>
    <scope>VARIANT IMD13 VAL-22</scope>
    <scope>CHARACTERIZATION OF VARIANT IMD13 VAL-22</scope>
</reference>
<reference key="23">
    <citation type="journal article" date="2023" name="Graefes Arch. Clin. Exp. Ophthalmol.">
        <title>Clinical-genetic findings in a group of subjects with macular dystrophies due to mutations in rare inherited retinopathy genes.</title>
        <authorList>
            <person name="Zenteno J.C."/>
            <person name="Arce-Gonzalez R."/>
            <person name="Matsui R."/>
            <person name="Lopez-Bolanos A."/>
            <person name="Montes L."/>
            <person name="Martinez-Aguilar A."/>
            <person name="Chacon-Camacho O.F."/>
        </authorList>
    </citation>
    <scope>VARIANT CORD24 201-GLU--PRO-240 DEL</scope>
</reference>
<protein>
    <recommendedName>
        <fullName>Protein unc-119 homolog A</fullName>
    </recommendedName>
    <alternativeName>
        <fullName>Retinal protein 4</fullName>
        <shortName>hRG4</shortName>
    </alternativeName>
</protein>
<organism>
    <name type="scientific">Homo sapiens</name>
    <name type="common">Human</name>
    <dbReference type="NCBI Taxonomy" id="9606"/>
    <lineage>
        <taxon>Eukaryota</taxon>
        <taxon>Metazoa</taxon>
        <taxon>Chordata</taxon>
        <taxon>Craniata</taxon>
        <taxon>Vertebrata</taxon>
        <taxon>Euteleostomi</taxon>
        <taxon>Mammalia</taxon>
        <taxon>Eutheria</taxon>
        <taxon>Euarchontoglires</taxon>
        <taxon>Primates</taxon>
        <taxon>Haplorrhini</taxon>
        <taxon>Catarrhini</taxon>
        <taxon>Hominidae</taxon>
        <taxon>Homo</taxon>
    </lineage>
</organism>
<proteinExistence type="evidence at protein level"/>